<gene>
    <name type="primary">pyrI</name>
    <name type="ordered locus">SSO0613</name>
</gene>
<organism>
    <name type="scientific">Saccharolobus solfataricus (strain ATCC 35092 / DSM 1617 / JCM 11322 / P2)</name>
    <name type="common">Sulfolobus solfataricus</name>
    <dbReference type="NCBI Taxonomy" id="273057"/>
    <lineage>
        <taxon>Archaea</taxon>
        <taxon>Thermoproteota</taxon>
        <taxon>Thermoprotei</taxon>
        <taxon>Sulfolobales</taxon>
        <taxon>Sulfolobaceae</taxon>
        <taxon>Saccharolobus</taxon>
    </lineage>
</organism>
<dbReference type="EMBL" id="Y18930">
    <property type="protein sequence ID" value="CAB57687.1"/>
    <property type="status" value="ALT_INIT"/>
    <property type="molecule type" value="Genomic_DNA"/>
</dbReference>
<dbReference type="EMBL" id="AE006641">
    <property type="protein sequence ID" value="AAK40924.1"/>
    <property type="status" value="ALT_INIT"/>
    <property type="molecule type" value="Genomic_DNA"/>
</dbReference>
<dbReference type="PIR" id="E90208">
    <property type="entry name" value="E90208"/>
</dbReference>
<dbReference type="RefSeq" id="WP_009991142.1">
    <property type="nucleotide sequence ID" value="NC_002754.1"/>
</dbReference>
<dbReference type="SMR" id="Q9UX07"/>
<dbReference type="FunCoup" id="Q9UX07">
    <property type="interactions" value="115"/>
</dbReference>
<dbReference type="STRING" id="273057.SSO0613"/>
<dbReference type="PaxDb" id="273057-SSO0613"/>
<dbReference type="EnsemblBacteria" id="AAK40924">
    <property type="protein sequence ID" value="AAK40924"/>
    <property type="gene ID" value="SSO0613"/>
</dbReference>
<dbReference type="GeneID" id="44129615"/>
<dbReference type="KEGG" id="sso:SSO0613"/>
<dbReference type="PATRIC" id="fig|273057.12.peg.621"/>
<dbReference type="eggNOG" id="arCOG04229">
    <property type="taxonomic scope" value="Archaea"/>
</dbReference>
<dbReference type="HOGENOM" id="CLU_128576_0_0_2"/>
<dbReference type="InParanoid" id="Q9UX07"/>
<dbReference type="PhylomeDB" id="Q9UX07"/>
<dbReference type="Proteomes" id="UP000001974">
    <property type="component" value="Chromosome"/>
</dbReference>
<dbReference type="GO" id="GO:0009347">
    <property type="term" value="C:aspartate carbamoyltransferase complex"/>
    <property type="evidence" value="ECO:0000318"/>
    <property type="project" value="GO_Central"/>
</dbReference>
<dbReference type="GO" id="GO:0046872">
    <property type="term" value="F:metal ion binding"/>
    <property type="evidence" value="ECO:0007669"/>
    <property type="project" value="UniProtKB-KW"/>
</dbReference>
<dbReference type="GO" id="GO:0006207">
    <property type="term" value="P:'de novo' pyrimidine nucleobase biosynthetic process"/>
    <property type="evidence" value="ECO:0000318"/>
    <property type="project" value="GO_Central"/>
</dbReference>
<dbReference type="GO" id="GO:0006221">
    <property type="term" value="P:pyrimidine nucleotide biosynthetic process"/>
    <property type="evidence" value="ECO:0007669"/>
    <property type="project" value="UniProtKB-UniRule"/>
</dbReference>
<dbReference type="Gene3D" id="2.30.30.20">
    <property type="entry name" value="Aspartate carbamoyltransferase regulatory subunit, C-terminal domain"/>
    <property type="match status" value="1"/>
</dbReference>
<dbReference type="Gene3D" id="3.30.70.140">
    <property type="entry name" value="Aspartate carbamoyltransferase regulatory subunit, N-terminal domain"/>
    <property type="match status" value="1"/>
</dbReference>
<dbReference type="HAMAP" id="MF_00002">
    <property type="entry name" value="Asp_carb_tr_reg"/>
    <property type="match status" value="1"/>
</dbReference>
<dbReference type="InterPro" id="IPR020545">
    <property type="entry name" value="Asp_carbamoyltransf_reg_N"/>
</dbReference>
<dbReference type="InterPro" id="IPR002801">
    <property type="entry name" value="Asp_carbamoylTrfase_reg"/>
</dbReference>
<dbReference type="InterPro" id="IPR020542">
    <property type="entry name" value="Asp_carbamoyltrfase_reg_C"/>
</dbReference>
<dbReference type="InterPro" id="IPR036792">
    <property type="entry name" value="Asp_carbatrfase_reg_C_sf"/>
</dbReference>
<dbReference type="InterPro" id="IPR036793">
    <property type="entry name" value="Asp_carbatrfase_reg_N_sf"/>
</dbReference>
<dbReference type="NCBIfam" id="TIGR00240">
    <property type="entry name" value="ATCase_reg"/>
    <property type="match status" value="1"/>
</dbReference>
<dbReference type="PANTHER" id="PTHR35805">
    <property type="entry name" value="ASPARTATE CARBAMOYLTRANSFERASE REGULATORY CHAIN"/>
    <property type="match status" value="1"/>
</dbReference>
<dbReference type="PANTHER" id="PTHR35805:SF1">
    <property type="entry name" value="ASPARTATE CARBAMOYLTRANSFERASE REGULATORY CHAIN"/>
    <property type="match status" value="1"/>
</dbReference>
<dbReference type="Pfam" id="PF01948">
    <property type="entry name" value="PyrI"/>
    <property type="match status" value="1"/>
</dbReference>
<dbReference type="Pfam" id="PF02748">
    <property type="entry name" value="PyrI_C"/>
    <property type="match status" value="1"/>
</dbReference>
<dbReference type="SUPFAM" id="SSF57825">
    <property type="entry name" value="Aspartate carbamoyltransferase, Regulatory-chain, C-terminal domain"/>
    <property type="match status" value="1"/>
</dbReference>
<dbReference type="SUPFAM" id="SSF54893">
    <property type="entry name" value="Aspartate carbamoyltransferase, Regulatory-chain, N-terminal domain"/>
    <property type="match status" value="1"/>
</dbReference>
<proteinExistence type="inferred from homology"/>
<reference key="1">
    <citation type="journal article" date="2000" name="Genome">
        <title>Gene content and organization of a 281-kbp contig from the genome of the extremely thermophilic archaeon, Sulfolobus solfataricus P2.</title>
        <authorList>
            <person name="Charlebois R.L."/>
            <person name="Singh R.K."/>
            <person name="Chan-Weiher C.C.-Y."/>
            <person name="Allard G."/>
            <person name="Chow C."/>
            <person name="Confalonieri F."/>
            <person name="Curtis B."/>
            <person name="Duguet M."/>
            <person name="Erauso G."/>
            <person name="Faguy D."/>
            <person name="Gaasterland T."/>
            <person name="Garrett R.A."/>
            <person name="Gordon P."/>
            <person name="Jeffries A.C."/>
            <person name="Kozera C."/>
            <person name="Kushwaha N."/>
            <person name="Lafleur E."/>
            <person name="Medina N."/>
            <person name="Peng X."/>
            <person name="Penny S.L."/>
            <person name="She Q."/>
            <person name="St Jean A."/>
            <person name="van der Oost J."/>
            <person name="Young F."/>
            <person name="Zivanovic Y."/>
            <person name="Doolittle W.F."/>
            <person name="Ragan M.A."/>
            <person name="Sensen C.W."/>
        </authorList>
    </citation>
    <scope>NUCLEOTIDE SEQUENCE [LARGE SCALE GENOMIC DNA]</scope>
    <source>
        <strain>ATCC 35092 / DSM 1617 / JCM 11322 / P2</strain>
    </source>
</reference>
<reference key="2">
    <citation type="journal article" date="2001" name="Proc. Natl. Acad. Sci. U.S.A.">
        <title>The complete genome of the crenarchaeon Sulfolobus solfataricus P2.</title>
        <authorList>
            <person name="She Q."/>
            <person name="Singh R.K."/>
            <person name="Confalonieri F."/>
            <person name="Zivanovic Y."/>
            <person name="Allard G."/>
            <person name="Awayez M.J."/>
            <person name="Chan-Weiher C.C.-Y."/>
            <person name="Clausen I.G."/>
            <person name="Curtis B.A."/>
            <person name="De Moors A."/>
            <person name="Erauso G."/>
            <person name="Fletcher C."/>
            <person name="Gordon P.M.K."/>
            <person name="Heikamp-de Jong I."/>
            <person name="Jeffries A.C."/>
            <person name="Kozera C.J."/>
            <person name="Medina N."/>
            <person name="Peng X."/>
            <person name="Thi-Ngoc H.P."/>
            <person name="Redder P."/>
            <person name="Schenk M.E."/>
            <person name="Theriault C."/>
            <person name="Tolstrup N."/>
            <person name="Charlebois R.L."/>
            <person name="Doolittle W.F."/>
            <person name="Duguet M."/>
            <person name="Gaasterland T."/>
            <person name="Garrett R.A."/>
            <person name="Ragan M.A."/>
            <person name="Sensen C.W."/>
            <person name="Van der Oost J."/>
        </authorList>
    </citation>
    <scope>NUCLEOTIDE SEQUENCE [LARGE SCALE GENOMIC DNA]</scope>
    <source>
        <strain>ATCC 35092 / DSM 1617 / JCM 11322 / P2</strain>
    </source>
</reference>
<evidence type="ECO:0000250" key="1"/>
<evidence type="ECO:0000305" key="2"/>
<feature type="chain" id="PRO_0000142343" description="Aspartate carbamoyltransferase regulatory chain">
    <location>
        <begin position="1"/>
        <end position="159"/>
    </location>
</feature>
<feature type="binding site" evidence="1">
    <location>
        <position position="113"/>
    </location>
    <ligand>
        <name>Zn(2+)</name>
        <dbReference type="ChEBI" id="CHEBI:29105"/>
    </ligand>
</feature>
<feature type="binding site" evidence="1">
    <location>
        <position position="118"/>
    </location>
    <ligand>
        <name>Zn(2+)</name>
        <dbReference type="ChEBI" id="CHEBI:29105"/>
    </ligand>
</feature>
<feature type="binding site" evidence="1">
    <location>
        <position position="142"/>
    </location>
    <ligand>
        <name>Zn(2+)</name>
        <dbReference type="ChEBI" id="CHEBI:29105"/>
    </ligand>
</feature>
<feature type="binding site" evidence="1">
    <location>
        <position position="145"/>
    </location>
    <ligand>
        <name>Zn(2+)</name>
        <dbReference type="ChEBI" id="CHEBI:29105"/>
    </ligand>
</feature>
<sequence>MISSSKRDELIVSKIRNGTVIDHIPAGRALAVLRILGIRGSEGYRVALVMNVESKKIGRKDIVKIEDRVIDEKEASLITLIAPSATINIIRDYVVTEKRHLEVPKQIRGLIKCPNPQCITNNDVEAESRFITISIKPLKLKCKYCEMYITEDDVIRQIL</sequence>
<comment type="function">
    <text evidence="1">Involved in allosteric regulation of aspartate carbamoyltransferase.</text>
</comment>
<comment type="cofactor">
    <cofactor evidence="1">
        <name>Zn(2+)</name>
        <dbReference type="ChEBI" id="CHEBI:29105"/>
    </cofactor>
    <text evidence="1">Binds 1 zinc ion per subunit.</text>
</comment>
<comment type="subunit">
    <text evidence="1">Contains catalytic and regulatory chains.</text>
</comment>
<comment type="similarity">
    <text evidence="2">Belongs to the PyrI family.</text>
</comment>
<comment type="sequence caution" evidence="2">
    <conflict type="erroneous initiation">
        <sequence resource="EMBL-CDS" id="AAK40924"/>
    </conflict>
</comment>
<comment type="sequence caution" evidence="2">
    <conflict type="erroneous initiation">
        <sequence resource="EMBL-CDS" id="CAB57687"/>
    </conflict>
</comment>
<keyword id="KW-0479">Metal-binding</keyword>
<keyword id="KW-0665">Pyrimidine biosynthesis</keyword>
<keyword id="KW-1185">Reference proteome</keyword>
<keyword id="KW-0862">Zinc</keyword>
<name>PYRI_SACS2</name>
<protein>
    <recommendedName>
        <fullName>Aspartate carbamoyltransferase regulatory chain</fullName>
    </recommendedName>
</protein>
<accession>Q9UX07</accession>